<proteinExistence type="inferred from homology"/>
<gene>
    <name evidence="1" type="primary">ugpC</name>
    <name type="ordered locus">BTH_I3018</name>
</gene>
<name>UGPC_BURTA</name>
<protein>
    <recommendedName>
        <fullName evidence="1">sn-glycerol-3-phosphate import ATP-binding protein UgpC</fullName>
        <ecNumber evidence="1">7.6.2.10</ecNumber>
    </recommendedName>
</protein>
<keyword id="KW-0067">ATP-binding</keyword>
<keyword id="KW-0997">Cell inner membrane</keyword>
<keyword id="KW-1003">Cell membrane</keyword>
<keyword id="KW-0472">Membrane</keyword>
<keyword id="KW-0547">Nucleotide-binding</keyword>
<keyword id="KW-0762">Sugar transport</keyword>
<keyword id="KW-1278">Translocase</keyword>
<keyword id="KW-0813">Transport</keyword>
<dbReference type="EC" id="7.6.2.10" evidence="1"/>
<dbReference type="EMBL" id="CP000086">
    <property type="protein sequence ID" value="ABC37398.1"/>
    <property type="molecule type" value="Genomic_DNA"/>
</dbReference>
<dbReference type="RefSeq" id="WP_009888485.1">
    <property type="nucleotide sequence ID" value="NZ_CP008786.1"/>
</dbReference>
<dbReference type="SMR" id="Q2SU77"/>
<dbReference type="GeneID" id="45122705"/>
<dbReference type="KEGG" id="bte:BTH_I3018"/>
<dbReference type="HOGENOM" id="CLU_000604_1_1_4"/>
<dbReference type="Proteomes" id="UP000001930">
    <property type="component" value="Chromosome I"/>
</dbReference>
<dbReference type="GO" id="GO:0055052">
    <property type="term" value="C:ATP-binding cassette (ABC) transporter complex, substrate-binding subunit-containing"/>
    <property type="evidence" value="ECO:0007669"/>
    <property type="project" value="TreeGrafter"/>
</dbReference>
<dbReference type="GO" id="GO:0015430">
    <property type="term" value="F:ABC-type glycerol-3-phosphate transporter activity"/>
    <property type="evidence" value="ECO:0007669"/>
    <property type="project" value="UniProtKB-EC"/>
</dbReference>
<dbReference type="GO" id="GO:0005524">
    <property type="term" value="F:ATP binding"/>
    <property type="evidence" value="ECO:0007669"/>
    <property type="project" value="UniProtKB-KW"/>
</dbReference>
<dbReference type="GO" id="GO:0016887">
    <property type="term" value="F:ATP hydrolysis activity"/>
    <property type="evidence" value="ECO:0007669"/>
    <property type="project" value="InterPro"/>
</dbReference>
<dbReference type="GO" id="GO:0008643">
    <property type="term" value="P:carbohydrate transport"/>
    <property type="evidence" value="ECO:0007669"/>
    <property type="project" value="InterPro"/>
</dbReference>
<dbReference type="GO" id="GO:0001407">
    <property type="term" value="P:glycerophosphodiester transmembrane transport"/>
    <property type="evidence" value="ECO:0007669"/>
    <property type="project" value="TreeGrafter"/>
</dbReference>
<dbReference type="CDD" id="cd03301">
    <property type="entry name" value="ABC_MalK_N"/>
    <property type="match status" value="1"/>
</dbReference>
<dbReference type="FunFam" id="3.40.50.300:FF:000042">
    <property type="entry name" value="Maltose/maltodextrin ABC transporter, ATP-binding protein"/>
    <property type="match status" value="1"/>
</dbReference>
<dbReference type="Gene3D" id="2.40.50.100">
    <property type="match status" value="1"/>
</dbReference>
<dbReference type="Gene3D" id="2.40.50.140">
    <property type="entry name" value="Nucleic acid-binding proteins"/>
    <property type="match status" value="1"/>
</dbReference>
<dbReference type="Gene3D" id="3.40.50.300">
    <property type="entry name" value="P-loop containing nucleotide triphosphate hydrolases"/>
    <property type="match status" value="1"/>
</dbReference>
<dbReference type="InterPro" id="IPR003593">
    <property type="entry name" value="AAA+_ATPase"/>
</dbReference>
<dbReference type="InterPro" id="IPR003439">
    <property type="entry name" value="ABC_transporter-like_ATP-bd"/>
</dbReference>
<dbReference type="InterPro" id="IPR017871">
    <property type="entry name" value="ABC_transporter-like_CS"/>
</dbReference>
<dbReference type="InterPro" id="IPR015855">
    <property type="entry name" value="ABC_transpr_MalK-like"/>
</dbReference>
<dbReference type="InterPro" id="IPR047641">
    <property type="entry name" value="ABC_transpr_MalK/UgpC-like"/>
</dbReference>
<dbReference type="InterPro" id="IPR008995">
    <property type="entry name" value="Mo/tungstate-bd_C_term_dom"/>
</dbReference>
<dbReference type="InterPro" id="IPR012340">
    <property type="entry name" value="NA-bd_OB-fold"/>
</dbReference>
<dbReference type="InterPro" id="IPR040582">
    <property type="entry name" value="OB_MalK-like"/>
</dbReference>
<dbReference type="InterPro" id="IPR027417">
    <property type="entry name" value="P-loop_NTPase"/>
</dbReference>
<dbReference type="NCBIfam" id="NF008653">
    <property type="entry name" value="PRK11650.1"/>
    <property type="match status" value="1"/>
</dbReference>
<dbReference type="PANTHER" id="PTHR43875">
    <property type="entry name" value="MALTODEXTRIN IMPORT ATP-BINDING PROTEIN MSMX"/>
    <property type="match status" value="1"/>
</dbReference>
<dbReference type="PANTHER" id="PTHR43875:SF12">
    <property type="entry name" value="SN-GLYCEROL-3-PHOSPHATE IMPORT ATP-BINDING PROTEIN UGPC"/>
    <property type="match status" value="1"/>
</dbReference>
<dbReference type="Pfam" id="PF00005">
    <property type="entry name" value="ABC_tran"/>
    <property type="match status" value="1"/>
</dbReference>
<dbReference type="Pfam" id="PF17912">
    <property type="entry name" value="OB_MalK"/>
    <property type="match status" value="1"/>
</dbReference>
<dbReference type="SMART" id="SM00382">
    <property type="entry name" value="AAA"/>
    <property type="match status" value="1"/>
</dbReference>
<dbReference type="SUPFAM" id="SSF50331">
    <property type="entry name" value="MOP-like"/>
    <property type="match status" value="1"/>
</dbReference>
<dbReference type="SUPFAM" id="SSF52540">
    <property type="entry name" value="P-loop containing nucleoside triphosphate hydrolases"/>
    <property type="match status" value="1"/>
</dbReference>
<dbReference type="PROSITE" id="PS00211">
    <property type="entry name" value="ABC_TRANSPORTER_1"/>
    <property type="match status" value="1"/>
</dbReference>
<dbReference type="PROSITE" id="PS50893">
    <property type="entry name" value="ABC_TRANSPORTER_2"/>
    <property type="match status" value="1"/>
</dbReference>
<dbReference type="PROSITE" id="PS51315">
    <property type="entry name" value="UGPC"/>
    <property type="match status" value="1"/>
</dbReference>
<sequence>MAALSLKGVRKSYDGAQYVLHGIDVDIADGEFVVLVGPSGCGKSTLLRMIAGLETVTEGEIAIGGRVVNTLEPKDRDIAMVFQNYALYPHMTVAQNMGYGLKIRGVERALIDARVQAAAQILELGPLLARRPRELSGGQRQRVAMGRAIVREPSVFLFDEPLSNLDAKLRVQMRLEIQRLHARLATTSVYVTHDQIEAMTLAQRVIVMNRGYAEQIGAPVDVYEKPATTFVASFIGSPAMNLLHGRLSEDGAAFDIADGPRLPVAGAAGAGREIAPGREWILGVRPEHMTPLPGAALATLAVDSCELLGADNLAHGRWGVHDVAVRLPHAMRPARGETLPVALPAQHLHFFDPATGKRAG</sequence>
<evidence type="ECO:0000255" key="1">
    <source>
        <dbReference type="HAMAP-Rule" id="MF_01727"/>
    </source>
</evidence>
<accession>Q2SU77</accession>
<comment type="function">
    <text evidence="1">Part of the ABC transporter complex UgpBAEC involved in sn-glycerol-3-phosphate (G3P) import. Responsible for energy coupling to the transport system.</text>
</comment>
<comment type="catalytic activity">
    <reaction evidence="1">
        <text>sn-glycerol 3-phosphate(out) + ATP + H2O = sn-glycerol 3-phosphate(in) + ADP + phosphate + H(+)</text>
        <dbReference type="Rhea" id="RHEA:21668"/>
        <dbReference type="ChEBI" id="CHEBI:15377"/>
        <dbReference type="ChEBI" id="CHEBI:15378"/>
        <dbReference type="ChEBI" id="CHEBI:30616"/>
        <dbReference type="ChEBI" id="CHEBI:43474"/>
        <dbReference type="ChEBI" id="CHEBI:57597"/>
        <dbReference type="ChEBI" id="CHEBI:456216"/>
        <dbReference type="EC" id="7.6.2.10"/>
    </reaction>
</comment>
<comment type="subunit">
    <text evidence="1">The complex is composed of two ATP-binding proteins (UgpC), two transmembrane proteins (UgpA and UgpE) and a solute-binding protein (UgpB).</text>
</comment>
<comment type="subcellular location">
    <subcellularLocation>
        <location evidence="1">Cell inner membrane</location>
        <topology evidence="1">Peripheral membrane protein</topology>
    </subcellularLocation>
</comment>
<comment type="similarity">
    <text evidence="1">Belongs to the ABC transporter superfamily. sn-glycerol-3-phosphate importer (TC 3.A.1.1.3) family.</text>
</comment>
<organism>
    <name type="scientific">Burkholderia thailandensis (strain ATCC 700388 / DSM 13276 / CCUG 48851 / CIP 106301 / E264)</name>
    <dbReference type="NCBI Taxonomy" id="271848"/>
    <lineage>
        <taxon>Bacteria</taxon>
        <taxon>Pseudomonadati</taxon>
        <taxon>Pseudomonadota</taxon>
        <taxon>Betaproteobacteria</taxon>
        <taxon>Burkholderiales</taxon>
        <taxon>Burkholderiaceae</taxon>
        <taxon>Burkholderia</taxon>
        <taxon>pseudomallei group</taxon>
    </lineage>
</organism>
<feature type="chain" id="PRO_0000289745" description="sn-glycerol-3-phosphate import ATP-binding protein UgpC">
    <location>
        <begin position="1"/>
        <end position="360"/>
    </location>
</feature>
<feature type="domain" description="ABC transporter" evidence="1">
    <location>
        <begin position="4"/>
        <end position="235"/>
    </location>
</feature>
<feature type="binding site" evidence="1">
    <location>
        <begin position="37"/>
        <end position="44"/>
    </location>
    <ligand>
        <name>ATP</name>
        <dbReference type="ChEBI" id="CHEBI:30616"/>
    </ligand>
</feature>
<reference key="1">
    <citation type="journal article" date="2005" name="BMC Genomics">
        <title>Bacterial genome adaptation to niches: divergence of the potential virulence genes in three Burkholderia species of different survival strategies.</title>
        <authorList>
            <person name="Kim H.S."/>
            <person name="Schell M.A."/>
            <person name="Yu Y."/>
            <person name="Ulrich R.L."/>
            <person name="Sarria S.H."/>
            <person name="Nierman W.C."/>
            <person name="DeShazer D."/>
        </authorList>
    </citation>
    <scope>NUCLEOTIDE SEQUENCE [LARGE SCALE GENOMIC DNA]</scope>
    <source>
        <strain>ATCC 700388 / DSM 13276 / CCUG 48851 / CIP 106301 / E264</strain>
    </source>
</reference>